<dbReference type="EC" id="2.7.7.6" evidence="1"/>
<dbReference type="EMBL" id="CP001013">
    <property type="protein sequence ID" value="ACB36177.1"/>
    <property type="molecule type" value="Genomic_DNA"/>
</dbReference>
<dbReference type="RefSeq" id="WP_012348923.1">
    <property type="nucleotide sequence ID" value="NC_010524.1"/>
</dbReference>
<dbReference type="SMR" id="B1Y7M9"/>
<dbReference type="STRING" id="395495.Lcho_3923"/>
<dbReference type="KEGG" id="lch:Lcho_3923"/>
<dbReference type="eggNOG" id="COG0202">
    <property type="taxonomic scope" value="Bacteria"/>
</dbReference>
<dbReference type="HOGENOM" id="CLU_053084_0_0_4"/>
<dbReference type="OrthoDB" id="9805706at2"/>
<dbReference type="Proteomes" id="UP000001693">
    <property type="component" value="Chromosome"/>
</dbReference>
<dbReference type="GO" id="GO:0005737">
    <property type="term" value="C:cytoplasm"/>
    <property type="evidence" value="ECO:0007669"/>
    <property type="project" value="UniProtKB-ARBA"/>
</dbReference>
<dbReference type="GO" id="GO:0000428">
    <property type="term" value="C:DNA-directed RNA polymerase complex"/>
    <property type="evidence" value="ECO:0007669"/>
    <property type="project" value="UniProtKB-KW"/>
</dbReference>
<dbReference type="GO" id="GO:0003677">
    <property type="term" value="F:DNA binding"/>
    <property type="evidence" value="ECO:0007669"/>
    <property type="project" value="UniProtKB-UniRule"/>
</dbReference>
<dbReference type="GO" id="GO:0003899">
    <property type="term" value="F:DNA-directed RNA polymerase activity"/>
    <property type="evidence" value="ECO:0007669"/>
    <property type="project" value="UniProtKB-UniRule"/>
</dbReference>
<dbReference type="GO" id="GO:0046983">
    <property type="term" value="F:protein dimerization activity"/>
    <property type="evidence" value="ECO:0007669"/>
    <property type="project" value="InterPro"/>
</dbReference>
<dbReference type="GO" id="GO:0006351">
    <property type="term" value="P:DNA-templated transcription"/>
    <property type="evidence" value="ECO:0007669"/>
    <property type="project" value="UniProtKB-UniRule"/>
</dbReference>
<dbReference type="CDD" id="cd06928">
    <property type="entry name" value="RNAP_alpha_NTD"/>
    <property type="match status" value="1"/>
</dbReference>
<dbReference type="FunFam" id="1.10.150.20:FF:000001">
    <property type="entry name" value="DNA-directed RNA polymerase subunit alpha"/>
    <property type="match status" value="1"/>
</dbReference>
<dbReference type="FunFam" id="2.170.120.12:FF:000001">
    <property type="entry name" value="DNA-directed RNA polymerase subunit alpha"/>
    <property type="match status" value="1"/>
</dbReference>
<dbReference type="Gene3D" id="1.10.150.20">
    <property type="entry name" value="5' to 3' exonuclease, C-terminal subdomain"/>
    <property type="match status" value="1"/>
</dbReference>
<dbReference type="Gene3D" id="2.170.120.12">
    <property type="entry name" value="DNA-directed RNA polymerase, insert domain"/>
    <property type="match status" value="1"/>
</dbReference>
<dbReference type="Gene3D" id="3.30.1360.10">
    <property type="entry name" value="RNA polymerase, RBP11-like subunit"/>
    <property type="match status" value="1"/>
</dbReference>
<dbReference type="HAMAP" id="MF_00059">
    <property type="entry name" value="RNApol_bact_RpoA"/>
    <property type="match status" value="1"/>
</dbReference>
<dbReference type="InterPro" id="IPR011262">
    <property type="entry name" value="DNA-dir_RNA_pol_insert"/>
</dbReference>
<dbReference type="InterPro" id="IPR011263">
    <property type="entry name" value="DNA-dir_RNA_pol_RpoA/D/Rpb3"/>
</dbReference>
<dbReference type="InterPro" id="IPR011773">
    <property type="entry name" value="DNA-dir_RpoA"/>
</dbReference>
<dbReference type="InterPro" id="IPR036603">
    <property type="entry name" value="RBP11-like"/>
</dbReference>
<dbReference type="InterPro" id="IPR011260">
    <property type="entry name" value="RNAP_asu_C"/>
</dbReference>
<dbReference type="InterPro" id="IPR036643">
    <property type="entry name" value="RNApol_insert_sf"/>
</dbReference>
<dbReference type="NCBIfam" id="NF003513">
    <property type="entry name" value="PRK05182.1-2"/>
    <property type="match status" value="1"/>
</dbReference>
<dbReference type="NCBIfam" id="NF003519">
    <property type="entry name" value="PRK05182.2-5"/>
    <property type="match status" value="1"/>
</dbReference>
<dbReference type="NCBIfam" id="TIGR02027">
    <property type="entry name" value="rpoA"/>
    <property type="match status" value="1"/>
</dbReference>
<dbReference type="Pfam" id="PF01000">
    <property type="entry name" value="RNA_pol_A_bac"/>
    <property type="match status" value="1"/>
</dbReference>
<dbReference type="Pfam" id="PF03118">
    <property type="entry name" value="RNA_pol_A_CTD"/>
    <property type="match status" value="1"/>
</dbReference>
<dbReference type="Pfam" id="PF01193">
    <property type="entry name" value="RNA_pol_L"/>
    <property type="match status" value="1"/>
</dbReference>
<dbReference type="SMART" id="SM00662">
    <property type="entry name" value="RPOLD"/>
    <property type="match status" value="1"/>
</dbReference>
<dbReference type="SUPFAM" id="SSF47789">
    <property type="entry name" value="C-terminal domain of RNA polymerase alpha subunit"/>
    <property type="match status" value="1"/>
</dbReference>
<dbReference type="SUPFAM" id="SSF56553">
    <property type="entry name" value="Insert subdomain of RNA polymerase alpha subunit"/>
    <property type="match status" value="1"/>
</dbReference>
<dbReference type="SUPFAM" id="SSF55257">
    <property type="entry name" value="RBP11-like subunits of RNA polymerase"/>
    <property type="match status" value="1"/>
</dbReference>
<comment type="function">
    <text evidence="1">DNA-dependent RNA polymerase catalyzes the transcription of DNA into RNA using the four ribonucleoside triphosphates as substrates.</text>
</comment>
<comment type="catalytic activity">
    <reaction evidence="1">
        <text>RNA(n) + a ribonucleoside 5'-triphosphate = RNA(n+1) + diphosphate</text>
        <dbReference type="Rhea" id="RHEA:21248"/>
        <dbReference type="Rhea" id="RHEA-COMP:14527"/>
        <dbReference type="Rhea" id="RHEA-COMP:17342"/>
        <dbReference type="ChEBI" id="CHEBI:33019"/>
        <dbReference type="ChEBI" id="CHEBI:61557"/>
        <dbReference type="ChEBI" id="CHEBI:140395"/>
        <dbReference type="EC" id="2.7.7.6"/>
    </reaction>
</comment>
<comment type="subunit">
    <text evidence="1">Homodimer. The RNAP catalytic core consists of 2 alpha, 1 beta, 1 beta' and 1 omega subunit. When a sigma factor is associated with the core the holoenzyme is formed, which can initiate transcription.</text>
</comment>
<comment type="domain">
    <text evidence="1">The N-terminal domain is essential for RNAP assembly and basal transcription, whereas the C-terminal domain is involved in interaction with transcriptional regulators and with upstream promoter elements.</text>
</comment>
<comment type="similarity">
    <text evidence="1">Belongs to the RNA polymerase alpha chain family.</text>
</comment>
<sequence length="328" mass="36309">MQTNLLKPKAINVDPLGGHRAKVTLEPFERGFGHTLGNALRRVLLSSMVGYAPTEVTIAGVLHEYSTVDGVQEDVVHIMLNLKGVVFRLHNRDEVTLVLRKEGEGPVKASDIQTPHDVEIINPDHVIAHLAQGGKLDMQIKVEKGRGYVPGSMRRYADEPTKSIGRIVLDASFSPLKRVSYTVESARVEQRTDLDKLVMEIETNGAISPEEAIRASAKILVEQLAVFAQLEGSDLAIFEAPAPRAQHFDPILLRPVDELELTVRSANCLKAENIYYIGDLIQRTETELLKTPNLGRKSLNEIKEVLASRGLTLGARLENWPPQGLDKR</sequence>
<reference key="1">
    <citation type="submission" date="2008-03" db="EMBL/GenBank/DDBJ databases">
        <title>Complete sequence of Leptothrix cholodnii SP-6.</title>
        <authorList>
            <consortium name="US DOE Joint Genome Institute"/>
            <person name="Copeland A."/>
            <person name="Lucas S."/>
            <person name="Lapidus A."/>
            <person name="Glavina del Rio T."/>
            <person name="Dalin E."/>
            <person name="Tice H."/>
            <person name="Bruce D."/>
            <person name="Goodwin L."/>
            <person name="Pitluck S."/>
            <person name="Chertkov O."/>
            <person name="Brettin T."/>
            <person name="Detter J.C."/>
            <person name="Han C."/>
            <person name="Kuske C.R."/>
            <person name="Schmutz J."/>
            <person name="Larimer F."/>
            <person name="Land M."/>
            <person name="Hauser L."/>
            <person name="Kyrpides N."/>
            <person name="Lykidis A."/>
            <person name="Emerson D."/>
            <person name="Richardson P."/>
        </authorList>
    </citation>
    <scope>NUCLEOTIDE SEQUENCE [LARGE SCALE GENOMIC DNA]</scope>
    <source>
        <strain>ATCC 51168 / LMG 8142 / SP-6</strain>
    </source>
</reference>
<protein>
    <recommendedName>
        <fullName evidence="1">DNA-directed RNA polymerase subunit alpha</fullName>
        <shortName evidence="1">RNAP subunit alpha</shortName>
        <ecNumber evidence="1">2.7.7.6</ecNumber>
    </recommendedName>
    <alternativeName>
        <fullName evidence="1">RNA polymerase subunit alpha</fullName>
    </alternativeName>
    <alternativeName>
        <fullName evidence="1">Transcriptase subunit alpha</fullName>
    </alternativeName>
</protein>
<organism>
    <name type="scientific">Leptothrix cholodnii (strain ATCC 51168 / LMG 8142 / SP-6)</name>
    <name type="common">Leptothrix discophora (strain SP-6)</name>
    <dbReference type="NCBI Taxonomy" id="395495"/>
    <lineage>
        <taxon>Bacteria</taxon>
        <taxon>Pseudomonadati</taxon>
        <taxon>Pseudomonadota</taxon>
        <taxon>Betaproteobacteria</taxon>
        <taxon>Burkholderiales</taxon>
        <taxon>Sphaerotilaceae</taxon>
        <taxon>Leptothrix</taxon>
    </lineage>
</organism>
<feature type="chain" id="PRO_1000091955" description="DNA-directed RNA polymerase subunit alpha">
    <location>
        <begin position="1"/>
        <end position="328"/>
    </location>
</feature>
<feature type="region of interest" description="Alpha N-terminal domain (alpha-NTD)" evidence="1">
    <location>
        <begin position="1"/>
        <end position="231"/>
    </location>
</feature>
<feature type="region of interest" description="Alpha C-terminal domain (alpha-CTD)" evidence="1">
    <location>
        <begin position="248"/>
        <end position="328"/>
    </location>
</feature>
<evidence type="ECO:0000255" key="1">
    <source>
        <dbReference type="HAMAP-Rule" id="MF_00059"/>
    </source>
</evidence>
<name>RPOA_LEPCP</name>
<accession>B1Y7M9</accession>
<keyword id="KW-0240">DNA-directed RNA polymerase</keyword>
<keyword id="KW-0548">Nucleotidyltransferase</keyword>
<keyword id="KW-1185">Reference proteome</keyword>
<keyword id="KW-0804">Transcription</keyword>
<keyword id="KW-0808">Transferase</keyword>
<proteinExistence type="inferred from homology"/>
<gene>
    <name evidence="1" type="primary">rpoA</name>
    <name type="ordered locus">Lcho_3923</name>
</gene>